<organism>
    <name type="scientific">Schizosaccharomyces pombe (strain 972 / ATCC 24843)</name>
    <name type="common">Fission yeast</name>
    <dbReference type="NCBI Taxonomy" id="284812"/>
    <lineage>
        <taxon>Eukaryota</taxon>
        <taxon>Fungi</taxon>
        <taxon>Dikarya</taxon>
        <taxon>Ascomycota</taxon>
        <taxon>Taphrinomycotina</taxon>
        <taxon>Schizosaccharomycetes</taxon>
        <taxon>Schizosaccharomycetales</taxon>
        <taxon>Schizosaccharomycetaceae</taxon>
        <taxon>Schizosaccharomyces</taxon>
    </lineage>
</organism>
<name>VPS72_SCHPO</name>
<gene>
    <name type="primary">swc2</name>
    <name type="synonym">vps72</name>
    <name type="ORF">SPBP35G2.13c</name>
</gene>
<evidence type="ECO:0000250" key="1"/>
<evidence type="ECO:0000255" key="2"/>
<evidence type="ECO:0000256" key="3">
    <source>
        <dbReference type="SAM" id="MobiDB-lite"/>
    </source>
</evidence>
<evidence type="ECO:0000269" key="4">
    <source>
    </source>
</evidence>
<evidence type="ECO:0000269" key="5">
    <source>
    </source>
</evidence>
<evidence type="ECO:0000305" key="6"/>
<keyword id="KW-0156">Chromatin regulator</keyword>
<keyword id="KW-0175">Coiled coil</keyword>
<keyword id="KW-0539">Nucleus</keyword>
<keyword id="KW-0597">Phosphoprotein</keyword>
<keyword id="KW-1185">Reference proteome</keyword>
<reference key="1">
    <citation type="journal article" date="2002" name="Nature">
        <title>The genome sequence of Schizosaccharomyces pombe.</title>
        <authorList>
            <person name="Wood V."/>
            <person name="Gwilliam R."/>
            <person name="Rajandream M.A."/>
            <person name="Lyne M.H."/>
            <person name="Lyne R."/>
            <person name="Stewart A."/>
            <person name="Sgouros J.G."/>
            <person name="Peat N."/>
            <person name="Hayles J."/>
            <person name="Baker S.G."/>
            <person name="Basham D."/>
            <person name="Bowman S."/>
            <person name="Brooks K."/>
            <person name="Brown D."/>
            <person name="Brown S."/>
            <person name="Chillingworth T."/>
            <person name="Churcher C.M."/>
            <person name="Collins M."/>
            <person name="Connor R."/>
            <person name="Cronin A."/>
            <person name="Davis P."/>
            <person name="Feltwell T."/>
            <person name="Fraser A."/>
            <person name="Gentles S."/>
            <person name="Goble A."/>
            <person name="Hamlin N."/>
            <person name="Harris D.E."/>
            <person name="Hidalgo J."/>
            <person name="Hodgson G."/>
            <person name="Holroyd S."/>
            <person name="Hornsby T."/>
            <person name="Howarth S."/>
            <person name="Huckle E.J."/>
            <person name="Hunt S."/>
            <person name="Jagels K."/>
            <person name="James K.D."/>
            <person name="Jones L."/>
            <person name="Jones M."/>
            <person name="Leather S."/>
            <person name="McDonald S."/>
            <person name="McLean J."/>
            <person name="Mooney P."/>
            <person name="Moule S."/>
            <person name="Mungall K.L."/>
            <person name="Murphy L.D."/>
            <person name="Niblett D."/>
            <person name="Odell C."/>
            <person name="Oliver K."/>
            <person name="O'Neil S."/>
            <person name="Pearson D."/>
            <person name="Quail M.A."/>
            <person name="Rabbinowitsch E."/>
            <person name="Rutherford K.M."/>
            <person name="Rutter S."/>
            <person name="Saunders D."/>
            <person name="Seeger K."/>
            <person name="Sharp S."/>
            <person name="Skelton J."/>
            <person name="Simmonds M.N."/>
            <person name="Squares R."/>
            <person name="Squares S."/>
            <person name="Stevens K."/>
            <person name="Taylor K."/>
            <person name="Taylor R.G."/>
            <person name="Tivey A."/>
            <person name="Walsh S.V."/>
            <person name="Warren T."/>
            <person name="Whitehead S."/>
            <person name="Woodward J.R."/>
            <person name="Volckaert G."/>
            <person name="Aert R."/>
            <person name="Robben J."/>
            <person name="Grymonprez B."/>
            <person name="Weltjens I."/>
            <person name="Vanstreels E."/>
            <person name="Rieger M."/>
            <person name="Schaefer M."/>
            <person name="Mueller-Auer S."/>
            <person name="Gabel C."/>
            <person name="Fuchs M."/>
            <person name="Duesterhoeft A."/>
            <person name="Fritzc C."/>
            <person name="Holzer E."/>
            <person name="Moestl D."/>
            <person name="Hilbert H."/>
            <person name="Borzym K."/>
            <person name="Langer I."/>
            <person name="Beck A."/>
            <person name="Lehrach H."/>
            <person name="Reinhardt R."/>
            <person name="Pohl T.M."/>
            <person name="Eger P."/>
            <person name="Zimmermann W."/>
            <person name="Wedler H."/>
            <person name="Wambutt R."/>
            <person name="Purnelle B."/>
            <person name="Goffeau A."/>
            <person name="Cadieu E."/>
            <person name="Dreano S."/>
            <person name="Gloux S."/>
            <person name="Lelaure V."/>
            <person name="Mottier S."/>
            <person name="Galibert F."/>
            <person name="Aves S.J."/>
            <person name="Xiang Z."/>
            <person name="Hunt C."/>
            <person name="Moore K."/>
            <person name="Hurst S.M."/>
            <person name="Lucas M."/>
            <person name="Rochet M."/>
            <person name="Gaillardin C."/>
            <person name="Tallada V.A."/>
            <person name="Garzon A."/>
            <person name="Thode G."/>
            <person name="Daga R.R."/>
            <person name="Cruzado L."/>
            <person name="Jimenez J."/>
            <person name="Sanchez M."/>
            <person name="del Rey F."/>
            <person name="Benito J."/>
            <person name="Dominguez A."/>
            <person name="Revuelta J.L."/>
            <person name="Moreno S."/>
            <person name="Armstrong J."/>
            <person name="Forsburg S.L."/>
            <person name="Cerutti L."/>
            <person name="Lowe T."/>
            <person name="McCombie W.R."/>
            <person name="Paulsen I."/>
            <person name="Potashkin J."/>
            <person name="Shpakovski G.V."/>
            <person name="Ussery D."/>
            <person name="Barrell B.G."/>
            <person name="Nurse P."/>
        </authorList>
    </citation>
    <scope>NUCLEOTIDE SEQUENCE [LARGE SCALE GENOMIC DNA]</scope>
    <source>
        <strain>972 / ATCC 24843</strain>
    </source>
</reference>
<reference key="2">
    <citation type="journal article" date="2006" name="Nat. Biotechnol.">
        <title>ORFeome cloning and global analysis of protein localization in the fission yeast Schizosaccharomyces pombe.</title>
        <authorList>
            <person name="Matsuyama A."/>
            <person name="Arai R."/>
            <person name="Yashiroda Y."/>
            <person name="Shirai A."/>
            <person name="Kamata A."/>
            <person name="Sekido S."/>
            <person name="Kobayashi Y."/>
            <person name="Hashimoto A."/>
            <person name="Hamamoto M."/>
            <person name="Hiraoka Y."/>
            <person name="Horinouchi S."/>
            <person name="Yoshida M."/>
        </authorList>
    </citation>
    <scope>SUBCELLULAR LOCATION [LARGE SCALE ANALYSIS]</scope>
</reference>
<reference key="3">
    <citation type="journal article" date="2008" name="J. Proteome Res.">
        <title>Phosphoproteome analysis of fission yeast.</title>
        <authorList>
            <person name="Wilson-Grady J.T."/>
            <person name="Villen J."/>
            <person name="Gygi S.P."/>
        </authorList>
    </citation>
    <scope>PHOSPHORYLATION [LARGE SCALE ANALYSIS] AT SER-64 AND SER-65</scope>
    <scope>IDENTIFICATION BY MASS SPECTROMETRY</scope>
</reference>
<protein>
    <recommendedName>
        <fullName>SWR complex protein 2</fullName>
    </recommendedName>
</protein>
<sequence>MSATESLVAGRTRRANAGNKMRELLEKEHLRMTQQNAEIEKEDEEYNIEEEEEAERDIEISSESSDEEAELKKLEEEGEEVEKILRDEERIKKRKIQKNRAANLQRTLQPPKRPTPSAASEVPKKKYKKIKVDPSARRTSSRMHTVLMAQSTETRLQEAKPRRKYTVSASANRQKGTMTQQQRFEEAAKTEAQNLSSLRNYVHLEEQRRLRLKRNAAKHRQLREPILKFISKTISTEDGREASNYYVAPLEHPLCHSAPPLQMPQHRAVECVITGKPAIYLDPVTQLPISNVQAFQQVREVYNQRYSWSAMLNLFH</sequence>
<proteinExistence type="evidence at protein level"/>
<feature type="chain" id="PRO_0000339144" description="SWR complex protein 2">
    <location>
        <begin position="1"/>
        <end position="316"/>
    </location>
</feature>
<feature type="region of interest" description="Disordered" evidence="3">
    <location>
        <begin position="1"/>
        <end position="81"/>
    </location>
</feature>
<feature type="region of interest" description="Disordered" evidence="3">
    <location>
        <begin position="93"/>
        <end position="127"/>
    </location>
</feature>
<feature type="region of interest" description="Disordered" evidence="3">
    <location>
        <begin position="153"/>
        <end position="180"/>
    </location>
</feature>
<feature type="coiled-coil region" evidence="2">
    <location>
        <begin position="20"/>
        <end position="95"/>
    </location>
</feature>
<feature type="compositionally biased region" description="Basic and acidic residues" evidence="3">
    <location>
        <begin position="20"/>
        <end position="31"/>
    </location>
</feature>
<feature type="compositionally biased region" description="Acidic residues" evidence="3">
    <location>
        <begin position="40"/>
        <end position="56"/>
    </location>
</feature>
<feature type="compositionally biased region" description="Basic and acidic residues" evidence="3">
    <location>
        <begin position="70"/>
        <end position="81"/>
    </location>
</feature>
<feature type="compositionally biased region" description="Polar residues" evidence="3">
    <location>
        <begin position="167"/>
        <end position="180"/>
    </location>
</feature>
<feature type="modified residue" description="Phosphoserine" evidence="5">
    <location>
        <position position="64"/>
    </location>
</feature>
<feature type="modified residue" description="Phosphoserine" evidence="5">
    <location>
        <position position="65"/>
    </location>
</feature>
<accession>Q9P790</accession>
<comment type="function">
    <text evidence="1">Participates in the catalytic exchange of histone H2A for the H2A variant pht1, an euchromatin-specific factor, leading to chromatin remodeling and changes in transcription of targeted genes.</text>
</comment>
<comment type="subunit">
    <text evidence="1">Component of the SWR1 chromatin-remodeling complex.</text>
</comment>
<comment type="subcellular location">
    <subcellularLocation>
        <location evidence="4">Nucleus</location>
    </subcellularLocation>
</comment>
<comment type="similarity">
    <text evidence="6">Belongs to the VPS72/YL1 family.</text>
</comment>
<dbReference type="EMBL" id="CU329671">
    <property type="protein sequence ID" value="CAB87375.1"/>
    <property type="molecule type" value="Genomic_DNA"/>
</dbReference>
<dbReference type="RefSeq" id="NP_595388.1">
    <property type="nucleotide sequence ID" value="NM_001021295.2"/>
</dbReference>
<dbReference type="BioGRID" id="277848">
    <property type="interactions" value="136"/>
</dbReference>
<dbReference type="FunCoup" id="Q9P790">
    <property type="interactions" value="579"/>
</dbReference>
<dbReference type="STRING" id="284812.Q9P790"/>
<dbReference type="iPTMnet" id="Q9P790"/>
<dbReference type="PaxDb" id="4896-SPBP35G2.13c.1"/>
<dbReference type="EnsemblFungi" id="SPBP35G2.13c.1">
    <property type="protein sequence ID" value="SPBP35G2.13c.1:pep"/>
    <property type="gene ID" value="SPBP35G2.13c"/>
</dbReference>
<dbReference type="GeneID" id="2541337"/>
<dbReference type="KEGG" id="spo:2541337"/>
<dbReference type="PomBase" id="SPBP35G2.13c">
    <property type="gene designation" value="swc2"/>
</dbReference>
<dbReference type="VEuPathDB" id="FungiDB:SPBP35G2.13c"/>
<dbReference type="eggNOG" id="KOG2897">
    <property type="taxonomic scope" value="Eukaryota"/>
</dbReference>
<dbReference type="HOGENOM" id="CLU_883275_0_0_1"/>
<dbReference type="InParanoid" id="Q9P790"/>
<dbReference type="OMA" id="TGPTIRY"/>
<dbReference type="PhylomeDB" id="Q9P790"/>
<dbReference type="PRO" id="PR:Q9P790"/>
<dbReference type="Proteomes" id="UP000002485">
    <property type="component" value="Chromosome II"/>
</dbReference>
<dbReference type="GO" id="GO:0005730">
    <property type="term" value="C:nucleolus"/>
    <property type="evidence" value="ECO:0007005"/>
    <property type="project" value="PomBase"/>
</dbReference>
<dbReference type="GO" id="GO:0005634">
    <property type="term" value="C:nucleus"/>
    <property type="evidence" value="ECO:0000318"/>
    <property type="project" value="GO_Central"/>
</dbReference>
<dbReference type="GO" id="GO:0000812">
    <property type="term" value="C:Swr1 complex"/>
    <property type="evidence" value="ECO:0000314"/>
    <property type="project" value="PomBase"/>
</dbReference>
<dbReference type="GO" id="GO:0016887">
    <property type="term" value="F:ATP hydrolysis activity"/>
    <property type="evidence" value="ECO:0000305"/>
    <property type="project" value="PomBase"/>
</dbReference>
<dbReference type="GO" id="GO:0006338">
    <property type="term" value="P:chromatin remodeling"/>
    <property type="evidence" value="ECO:0000353"/>
    <property type="project" value="PomBase"/>
</dbReference>
<dbReference type="GO" id="GO:0045815">
    <property type="term" value="P:transcription initiation-coupled chromatin remodeling"/>
    <property type="evidence" value="ECO:0000305"/>
    <property type="project" value="PomBase"/>
</dbReference>
<dbReference type="InterPro" id="IPR013272">
    <property type="entry name" value="Vps72/YL1_C"/>
</dbReference>
<dbReference type="InterPro" id="IPR046757">
    <property type="entry name" value="YL1_N"/>
</dbReference>
<dbReference type="PANTHER" id="PTHR13275:SF4">
    <property type="entry name" value="VACUOLAR PROTEIN SORTING-ASSOCIATED PROTEIN 72 HOMOLOG"/>
    <property type="match status" value="1"/>
</dbReference>
<dbReference type="PANTHER" id="PTHR13275">
    <property type="entry name" value="YL-1 PROTEIN TRANSCRIPTION FACTOR-LIKE 1"/>
    <property type="match status" value="1"/>
</dbReference>
<dbReference type="Pfam" id="PF05764">
    <property type="entry name" value="YL1"/>
    <property type="match status" value="1"/>
</dbReference>
<dbReference type="Pfam" id="PF08265">
    <property type="entry name" value="YL1_C"/>
    <property type="match status" value="1"/>
</dbReference>
<dbReference type="SMART" id="SM00993">
    <property type="entry name" value="YL1_C"/>
    <property type="match status" value="1"/>
</dbReference>